<comment type="subcellular location">
    <subcellularLocation>
        <location evidence="1">Cell inner membrane</location>
        <topology evidence="1">Single-pass membrane protein</topology>
    </subcellularLocation>
</comment>
<comment type="similarity">
    <text evidence="1">Belongs to the UPF0387 family.</text>
</comment>
<protein>
    <recommendedName>
        <fullName evidence="1">UPF0387 membrane protein YohO</fullName>
    </recommendedName>
</protein>
<keyword id="KW-0997">Cell inner membrane</keyword>
<keyword id="KW-1003">Cell membrane</keyword>
<keyword id="KW-0472">Membrane</keyword>
<keyword id="KW-1185">Reference proteome</keyword>
<keyword id="KW-0812">Transmembrane</keyword>
<keyword id="KW-1133">Transmembrane helix</keyword>
<organism>
    <name type="scientific">Shigella sonnei (strain Ss046)</name>
    <dbReference type="NCBI Taxonomy" id="300269"/>
    <lineage>
        <taxon>Bacteria</taxon>
        <taxon>Pseudomonadati</taxon>
        <taxon>Pseudomonadota</taxon>
        <taxon>Gammaproteobacteria</taxon>
        <taxon>Enterobacterales</taxon>
        <taxon>Enterobacteriaceae</taxon>
        <taxon>Shigella</taxon>
    </lineage>
</organism>
<feature type="chain" id="PRO_0000252204" description="UPF0387 membrane protein YohO">
    <location>
        <begin position="1"/>
        <end position="35"/>
    </location>
</feature>
<feature type="transmembrane region" description="Helical" evidence="1">
    <location>
        <begin position="6"/>
        <end position="26"/>
    </location>
</feature>
<evidence type="ECO:0000255" key="1">
    <source>
        <dbReference type="HAMAP-Rule" id="MF_01362"/>
    </source>
</evidence>
<dbReference type="EMBL" id="CP000038">
    <property type="protein sequence ID" value="AAZ88835.1"/>
    <property type="molecule type" value="Genomic_DNA"/>
</dbReference>
<dbReference type="RefSeq" id="WP_001216963.1">
    <property type="nucleotide sequence ID" value="NC_007384.1"/>
</dbReference>
<dbReference type="KEGG" id="ssn:SSON_2184"/>
<dbReference type="HOGENOM" id="CLU_220259_0_0_6"/>
<dbReference type="Proteomes" id="UP000002529">
    <property type="component" value="Chromosome"/>
</dbReference>
<dbReference type="GO" id="GO:0005886">
    <property type="term" value="C:plasma membrane"/>
    <property type="evidence" value="ECO:0007669"/>
    <property type="project" value="UniProtKB-SubCell"/>
</dbReference>
<dbReference type="HAMAP" id="MF_01362">
    <property type="entry name" value="UPF0387"/>
    <property type="match status" value="1"/>
</dbReference>
<dbReference type="InterPro" id="IPR020870">
    <property type="entry name" value="UPF0387_membrane"/>
</dbReference>
<dbReference type="NCBIfam" id="NF010225">
    <property type="entry name" value="PRK13681.1"/>
    <property type="match status" value="1"/>
</dbReference>
<name>YOHO_SHISS</name>
<reference key="1">
    <citation type="journal article" date="2005" name="Nucleic Acids Res.">
        <title>Genome dynamics and diversity of Shigella species, the etiologic agents of bacillary dysentery.</title>
        <authorList>
            <person name="Yang F."/>
            <person name="Yang J."/>
            <person name="Zhang X."/>
            <person name="Chen L."/>
            <person name="Jiang Y."/>
            <person name="Yan Y."/>
            <person name="Tang X."/>
            <person name="Wang J."/>
            <person name="Xiong Z."/>
            <person name="Dong J."/>
            <person name="Xue Y."/>
            <person name="Zhu Y."/>
            <person name="Xu X."/>
            <person name="Sun L."/>
            <person name="Chen S."/>
            <person name="Nie H."/>
            <person name="Peng J."/>
            <person name="Xu J."/>
            <person name="Wang Y."/>
            <person name="Yuan Z."/>
            <person name="Wen Y."/>
            <person name="Yao Z."/>
            <person name="Shen Y."/>
            <person name="Qiang B."/>
            <person name="Hou Y."/>
            <person name="Yu J."/>
            <person name="Jin Q."/>
        </authorList>
    </citation>
    <scope>NUCLEOTIDE SEQUENCE [LARGE SCALE GENOMIC DNA]</scope>
    <source>
        <strain>Ss046</strain>
    </source>
</reference>
<proteinExistence type="inferred from homology"/>
<sequence>MRIAKIGVIALFLFMALGGIGGVMLAGYTFILRAG</sequence>
<accession>Q3Z077</accession>
<gene>
    <name evidence="1" type="primary">yohO</name>
    <name type="ordered locus">SSON_2184</name>
</gene>